<reference key="1">
    <citation type="journal article" date="1998" name="Gene">
        <title>Expression and cDNA cloning of porcine peroxisome proliferator-activated receptor gamma (PPARgamma).</title>
        <authorList>
            <person name="Houseknecht K.L."/>
            <person name="Bidwell C.A."/>
            <person name="Portocarrero C.P."/>
            <person name="Spurlock M.E."/>
        </authorList>
    </citation>
    <scope>NUCLEOTIDE SEQUENCE [MRNA] (ISOFORMS 1 AND 2)</scope>
    <source>
        <tissue>Adipose tissue</tissue>
    </source>
</reference>
<reference key="2">
    <citation type="journal article" date="1999" name="Comp. Biochem. Physiol.">
        <title>Expression of porcine adipocyte transcripts: tissue distribution and differentiation in vitro and in vivo.</title>
        <authorList>
            <person name="Ding S.T."/>
            <person name="McNeel R.L."/>
            <person name="Mersmann H.J."/>
        </authorList>
    </citation>
    <scope>NUCLEOTIDE SEQUENCE [MRNA] (ISOFORM 2)</scope>
</reference>
<reference key="3">
    <citation type="journal article" date="1998" name="Biochem. Biophys. Res. Commun.">
        <title>Characterisation of porcine peroxisome proliferator-activated receptors gamma 1 and gamma 2: detection of breed and age differences in gene expression.</title>
        <authorList>
            <person name="Grindflek E."/>
            <person name="Sundvold H."/>
            <person name="Klungland H."/>
            <person name="Lien S."/>
        </authorList>
    </citation>
    <scope>NUCLEOTIDE SEQUENCE [MRNA] (ISOFORMS 1 AND 2)</scope>
    <source>
        <strain>Duroc</strain>
        <strain>Norwegian Landrace</strain>
        <tissue>Adipocyte</tissue>
    </source>
</reference>
<reference key="4">
    <citation type="journal article" date="2005" name="J. Anim. Breed. Genet.">
        <title>Identification and characterization of novel peroxisome proliferator-activated receptor-gamma (PPAR-gamma) transcriptional variants in pig and human.</title>
        <authorList>
            <person name="Omi T."/>
            <person name="Brenig B."/>
            <person name="Kramer S.S."/>
            <person name="Iwamoto S."/>
            <person name="Stranzinger G."/>
            <person name="Neuenshwander S."/>
        </authorList>
    </citation>
    <scope>NUCLEOTIDE SEQUENCE [MRNA] (ISOFORM 2)</scope>
</reference>
<feature type="chain" id="PRO_0000053495" description="Peroxisome proliferator-activated receptor gamma">
    <location>
        <begin position="1"/>
        <end position="504"/>
    </location>
</feature>
<feature type="domain" description="NR LBD" evidence="5">
    <location>
        <begin position="237"/>
        <end position="502"/>
    </location>
</feature>
<feature type="DNA-binding region" description="Nuclear receptor" evidence="4">
    <location>
        <begin position="135"/>
        <end position="209"/>
    </location>
</feature>
<feature type="zinc finger region" description="NR C4-type" evidence="4">
    <location>
        <begin position="138"/>
        <end position="158"/>
    </location>
</feature>
<feature type="zinc finger region" description="NR C4-type" evidence="4">
    <location>
        <begin position="175"/>
        <end position="197"/>
    </location>
</feature>
<feature type="region of interest" description="Interaction with FAM120B" evidence="1">
    <location>
        <begin position="204"/>
        <end position="279"/>
    </location>
</feature>
<feature type="short sequence motif" description="9aaTAD" evidence="2">
    <location>
        <begin position="494"/>
        <end position="502"/>
    </location>
</feature>
<feature type="modified residue" description="Phosphoserine; by MAPK" evidence="3">
    <location>
        <position position="111"/>
    </location>
</feature>
<feature type="cross-link" description="Glycyl lysine isopeptide (Lys-Gly) (interchain with G-Cter in ubiquitin)" evidence="2">
    <location>
        <position position="251"/>
    </location>
</feature>
<feature type="splice variant" id="VSP_003648" description="In isoform 1." evidence="6 7">
    <location>
        <begin position="1"/>
        <end position="29"/>
    </location>
</feature>
<feature type="sequence conflict" description="In Ref. 3; CAA07224/CAA07225." evidence="8" ref="3">
    <original>K</original>
    <variation>R</variation>
    <location>
        <position position="381"/>
    </location>
</feature>
<feature type="sequence conflict" description="In Ref. 3; CAA07224/CAA07225." evidence="8" ref="3">
    <original>G</original>
    <variation>R</variation>
    <location>
        <position position="426"/>
    </location>
</feature>
<evidence type="ECO:0000250" key="1"/>
<evidence type="ECO:0000250" key="2">
    <source>
        <dbReference type="UniProtKB" id="P37231"/>
    </source>
</evidence>
<evidence type="ECO:0000250" key="3">
    <source>
        <dbReference type="UniProtKB" id="P37238"/>
    </source>
</evidence>
<evidence type="ECO:0000255" key="4">
    <source>
        <dbReference type="PROSITE-ProRule" id="PRU00407"/>
    </source>
</evidence>
<evidence type="ECO:0000255" key="5">
    <source>
        <dbReference type="PROSITE-ProRule" id="PRU01189"/>
    </source>
</evidence>
<evidence type="ECO:0000303" key="6">
    <source>
    </source>
</evidence>
<evidence type="ECO:0000303" key="7">
    <source>
    </source>
</evidence>
<evidence type="ECO:0000305" key="8"/>
<keyword id="KW-0010">Activator</keyword>
<keyword id="KW-0025">Alternative splicing</keyword>
<keyword id="KW-0090">Biological rhythms</keyword>
<keyword id="KW-0963">Cytoplasm</keyword>
<keyword id="KW-0238">DNA-binding</keyword>
<keyword id="KW-1017">Isopeptide bond</keyword>
<keyword id="KW-0479">Metal-binding</keyword>
<keyword id="KW-0539">Nucleus</keyword>
<keyword id="KW-0597">Phosphoprotein</keyword>
<keyword id="KW-0675">Receptor</keyword>
<keyword id="KW-1185">Reference proteome</keyword>
<keyword id="KW-0804">Transcription</keyword>
<keyword id="KW-0805">Transcription regulation</keyword>
<keyword id="KW-0832">Ubl conjugation</keyword>
<keyword id="KW-0862">Zinc</keyword>
<keyword id="KW-0863">Zinc-finger</keyword>
<name>PPARG_PIG</name>
<dbReference type="EMBL" id="AF059245">
    <property type="protein sequence ID" value="AAC14348.1"/>
    <property type="molecule type" value="mRNA"/>
</dbReference>
<dbReference type="EMBL" id="AF103946">
    <property type="protein sequence ID" value="AAD19577.1"/>
    <property type="molecule type" value="mRNA"/>
</dbReference>
<dbReference type="EMBL" id="AJ006756">
    <property type="protein sequence ID" value="CAA07224.1"/>
    <property type="molecule type" value="mRNA"/>
</dbReference>
<dbReference type="EMBL" id="AJ006757">
    <property type="protein sequence ID" value="CAA07225.1"/>
    <property type="molecule type" value="mRNA"/>
</dbReference>
<dbReference type="EMBL" id="AB097930">
    <property type="protein sequence ID" value="BAD20646.1"/>
    <property type="molecule type" value="mRNA"/>
</dbReference>
<dbReference type="PIR" id="JE0280">
    <property type="entry name" value="JE0280"/>
</dbReference>
<dbReference type="RefSeq" id="NP_999544.1">
    <molecule id="O62807-1"/>
    <property type="nucleotide sequence ID" value="NM_214379.1"/>
</dbReference>
<dbReference type="RefSeq" id="XP_005669840.1">
    <molecule id="O62807-2"/>
    <property type="nucleotide sequence ID" value="XM_005669783.3"/>
</dbReference>
<dbReference type="RefSeq" id="XP_005669841.1">
    <molecule id="O62807-2"/>
    <property type="nucleotide sequence ID" value="XM_005669784.3"/>
</dbReference>
<dbReference type="RefSeq" id="XP_005669845.3">
    <molecule id="O62807-2"/>
    <property type="nucleotide sequence ID" value="XM_005669788.3"/>
</dbReference>
<dbReference type="RefSeq" id="XP_005669846.1">
    <molecule id="O62807-2"/>
    <property type="nucleotide sequence ID" value="XM_005669789.3"/>
</dbReference>
<dbReference type="RefSeq" id="XP_013837434.1">
    <molecule id="O62807-2"/>
    <property type="nucleotide sequence ID" value="XM_013981980.2"/>
</dbReference>
<dbReference type="RefSeq" id="XP_013837435.1">
    <molecule id="O62807-2"/>
    <property type="nucleotide sequence ID" value="XM_013981981.2"/>
</dbReference>
<dbReference type="RefSeq" id="XP_013837436.1">
    <molecule id="O62807-2"/>
    <property type="nucleotide sequence ID" value="XM_013981982.2"/>
</dbReference>
<dbReference type="BMRB" id="O62807"/>
<dbReference type="SMR" id="O62807"/>
<dbReference type="FunCoup" id="O62807">
    <property type="interactions" value="211"/>
</dbReference>
<dbReference type="STRING" id="9823.ENSSSCP00000012339"/>
<dbReference type="PaxDb" id="9823-ENSSSCP00000012339"/>
<dbReference type="Ensembl" id="ENSSSCT00000012672.5">
    <molecule id="O62807-1"/>
    <property type="protein sequence ID" value="ENSSSCP00000012339.5"/>
    <property type="gene ID" value="ENSSSCG00000011579.5"/>
</dbReference>
<dbReference type="Ensembl" id="ENSSSCT00000038744.3">
    <molecule id="O62807-2"/>
    <property type="protein sequence ID" value="ENSSSCP00000031550.3"/>
    <property type="gene ID" value="ENSSSCG00000011579.5"/>
</dbReference>
<dbReference type="Ensembl" id="ENSSSCT00055019853.1">
    <molecule id="O62807-1"/>
    <property type="protein sequence ID" value="ENSSSCP00055015667.1"/>
    <property type="gene ID" value="ENSSSCG00055010097.1"/>
</dbReference>
<dbReference type="Ensembl" id="ENSSSCT00065046377.1">
    <molecule id="O62807-1"/>
    <property type="protein sequence ID" value="ENSSSCP00065019910.1"/>
    <property type="gene ID" value="ENSSSCG00065034050.1"/>
</dbReference>
<dbReference type="Ensembl" id="ENSSSCT00070033522.1">
    <molecule id="O62807-2"/>
    <property type="protein sequence ID" value="ENSSSCP00070027999.1"/>
    <property type="gene ID" value="ENSSSCG00070016976.1"/>
</dbReference>
<dbReference type="Ensembl" id="ENSSSCT00070033549.1">
    <molecule id="O62807-1"/>
    <property type="protein sequence ID" value="ENSSSCP00070028013.1"/>
    <property type="gene ID" value="ENSSSCG00070016976.1"/>
</dbReference>
<dbReference type="Ensembl" id="ENSSSCT00070033567.1">
    <molecule id="O62807-2"/>
    <property type="protein sequence ID" value="ENSSSCP00070028026.1"/>
    <property type="gene ID" value="ENSSSCG00070016976.1"/>
</dbReference>
<dbReference type="Ensembl" id="ENSSSCT00070033589.1">
    <molecule id="O62807-2"/>
    <property type="protein sequence ID" value="ENSSSCP00070028038.1"/>
    <property type="gene ID" value="ENSSSCG00070016976.1"/>
</dbReference>
<dbReference type="Ensembl" id="ENSSSCT00070033621.1">
    <molecule id="O62807-2"/>
    <property type="protein sequence ID" value="ENSSSCP00070028059.1"/>
    <property type="gene ID" value="ENSSSCG00070016976.1"/>
</dbReference>
<dbReference type="Ensembl" id="ENSSSCT00070033629.1">
    <molecule id="O62807-2"/>
    <property type="protein sequence ID" value="ENSSSCP00070028066.1"/>
    <property type="gene ID" value="ENSSSCG00070016976.1"/>
</dbReference>
<dbReference type="Ensembl" id="ENSSSCT00115033373">
    <molecule id="O62807-1"/>
    <property type="protein sequence ID" value="ENSSSCP00115031688"/>
    <property type="gene ID" value="ENSSSCG00115018840"/>
</dbReference>
<dbReference type="GeneID" id="397671"/>
<dbReference type="KEGG" id="ssc:397671"/>
<dbReference type="CTD" id="5468"/>
<dbReference type="eggNOG" id="KOG3575">
    <property type="taxonomic scope" value="Eukaryota"/>
</dbReference>
<dbReference type="GeneTree" id="ENSGT00940000158273"/>
<dbReference type="HOGENOM" id="CLU_007368_4_2_1"/>
<dbReference type="InParanoid" id="O62807"/>
<dbReference type="OMA" id="EMPFWPL"/>
<dbReference type="OrthoDB" id="7634782at2759"/>
<dbReference type="TreeFam" id="TF316304"/>
<dbReference type="Reactome" id="R-SSC-381340">
    <property type="pathway name" value="Transcriptional regulation of white adipocyte differentiation"/>
</dbReference>
<dbReference type="Reactome" id="R-SSC-383280">
    <property type="pathway name" value="Nuclear Receptor transcription pathway"/>
</dbReference>
<dbReference type="Reactome" id="R-SSC-9841922">
    <property type="pathway name" value="MLL4 and MLL3 complexes regulate expression of PPARG target genes in adipogenesis and hepatic steatosis"/>
</dbReference>
<dbReference type="Proteomes" id="UP000008227">
    <property type="component" value="Chromosome 13"/>
</dbReference>
<dbReference type="Proteomes" id="UP000314985">
    <property type="component" value="Chromosome 13"/>
</dbReference>
<dbReference type="Proteomes" id="UP000694570">
    <property type="component" value="Unplaced"/>
</dbReference>
<dbReference type="Proteomes" id="UP000694571">
    <property type="component" value="Unplaced"/>
</dbReference>
<dbReference type="Proteomes" id="UP000694720">
    <property type="component" value="Unplaced"/>
</dbReference>
<dbReference type="Proteomes" id="UP000694722">
    <property type="component" value="Unplaced"/>
</dbReference>
<dbReference type="Proteomes" id="UP000694723">
    <property type="component" value="Unplaced"/>
</dbReference>
<dbReference type="Proteomes" id="UP000694724">
    <property type="component" value="Unplaced"/>
</dbReference>
<dbReference type="Proteomes" id="UP000694725">
    <property type="component" value="Unplaced"/>
</dbReference>
<dbReference type="Proteomes" id="UP000694726">
    <property type="component" value="Unplaced"/>
</dbReference>
<dbReference type="Proteomes" id="UP000694727">
    <property type="component" value="Unplaced"/>
</dbReference>
<dbReference type="Proteomes" id="UP000694728">
    <property type="component" value="Unplaced"/>
</dbReference>
<dbReference type="GO" id="GO:0005737">
    <property type="term" value="C:cytoplasm"/>
    <property type="evidence" value="ECO:0007669"/>
    <property type="project" value="UniProtKB-SubCell"/>
</dbReference>
<dbReference type="GO" id="GO:0005634">
    <property type="term" value="C:nucleus"/>
    <property type="evidence" value="ECO:0000314"/>
    <property type="project" value="AgBase"/>
</dbReference>
<dbReference type="GO" id="GO:0003682">
    <property type="term" value="F:chromatin binding"/>
    <property type="evidence" value="ECO:0000250"/>
    <property type="project" value="UniProtKB"/>
</dbReference>
<dbReference type="GO" id="GO:0003700">
    <property type="term" value="F:DNA-binding transcription factor activity"/>
    <property type="evidence" value="ECO:0000250"/>
    <property type="project" value="UniProtKB"/>
</dbReference>
<dbReference type="GO" id="GO:0070888">
    <property type="term" value="F:E-box binding"/>
    <property type="evidence" value="ECO:0000250"/>
    <property type="project" value="UniProtKB"/>
</dbReference>
<dbReference type="GO" id="GO:0004879">
    <property type="term" value="F:nuclear receptor activity"/>
    <property type="evidence" value="ECO:0000314"/>
    <property type="project" value="GO_Central"/>
</dbReference>
<dbReference type="GO" id="GO:0000976">
    <property type="term" value="F:transcription cis-regulatory region binding"/>
    <property type="evidence" value="ECO:0000250"/>
    <property type="project" value="UniProtKB"/>
</dbReference>
<dbReference type="GO" id="GO:0008270">
    <property type="term" value="F:zinc ion binding"/>
    <property type="evidence" value="ECO:0007669"/>
    <property type="project" value="UniProtKB-KW"/>
</dbReference>
<dbReference type="GO" id="GO:0032869">
    <property type="term" value="P:cellular response to insulin stimulus"/>
    <property type="evidence" value="ECO:0000250"/>
    <property type="project" value="UniProtKB"/>
</dbReference>
<dbReference type="GO" id="GO:0010629">
    <property type="term" value="P:negative regulation of gene expression"/>
    <property type="evidence" value="ECO:0000315"/>
    <property type="project" value="AgBase"/>
</dbReference>
<dbReference type="GO" id="GO:0035357">
    <property type="term" value="P:peroxisome proliferator activated receptor signaling pathway"/>
    <property type="evidence" value="ECO:0000250"/>
    <property type="project" value="UniProtKB"/>
</dbReference>
<dbReference type="GO" id="GO:0010875">
    <property type="term" value="P:positive regulation of cholesterol efflux"/>
    <property type="evidence" value="ECO:0000315"/>
    <property type="project" value="AgBase"/>
</dbReference>
<dbReference type="GO" id="GO:0045893">
    <property type="term" value="P:positive regulation of DNA-templated transcription"/>
    <property type="evidence" value="ECO:0000315"/>
    <property type="project" value="AgBase"/>
</dbReference>
<dbReference type="GO" id="GO:0032385">
    <property type="term" value="P:positive regulation of intracellular cholesterol transport"/>
    <property type="evidence" value="ECO:0000315"/>
    <property type="project" value="AgBase"/>
</dbReference>
<dbReference type="GO" id="GO:0031394">
    <property type="term" value="P:positive regulation of prostaglandin biosynthetic process"/>
    <property type="evidence" value="ECO:0000315"/>
    <property type="project" value="AgBase"/>
</dbReference>
<dbReference type="GO" id="GO:0050714">
    <property type="term" value="P:positive regulation of protein secretion"/>
    <property type="evidence" value="ECO:0000315"/>
    <property type="project" value="AgBase"/>
</dbReference>
<dbReference type="GO" id="GO:0045944">
    <property type="term" value="P:positive regulation of transcription by RNA polymerase II"/>
    <property type="evidence" value="ECO:0000314"/>
    <property type="project" value="UniProtKB"/>
</dbReference>
<dbReference type="GO" id="GO:0042752">
    <property type="term" value="P:regulation of circadian rhythm"/>
    <property type="evidence" value="ECO:0000250"/>
    <property type="project" value="UniProtKB"/>
</dbReference>
<dbReference type="GO" id="GO:1903076">
    <property type="term" value="P:regulation of protein localization to plasma membrane"/>
    <property type="evidence" value="ECO:0000315"/>
    <property type="project" value="AgBase"/>
</dbReference>
<dbReference type="GO" id="GO:0006357">
    <property type="term" value="P:regulation of transcription by RNA polymerase II"/>
    <property type="evidence" value="ECO:0000250"/>
    <property type="project" value="UniProtKB"/>
</dbReference>
<dbReference type="GO" id="GO:0048384">
    <property type="term" value="P:retinoic acid receptor signaling pathway"/>
    <property type="evidence" value="ECO:0000314"/>
    <property type="project" value="GO_Central"/>
</dbReference>
<dbReference type="GO" id="GO:0048511">
    <property type="term" value="P:rhythmic process"/>
    <property type="evidence" value="ECO:0007669"/>
    <property type="project" value="UniProtKB-KW"/>
</dbReference>
<dbReference type="CDD" id="cd06965">
    <property type="entry name" value="NR_DBD_Ppar"/>
    <property type="match status" value="1"/>
</dbReference>
<dbReference type="CDD" id="cd06932">
    <property type="entry name" value="NR_LBD_PPAR"/>
    <property type="match status" value="1"/>
</dbReference>
<dbReference type="FunFam" id="1.10.565.10:FF:000017">
    <property type="entry name" value="Peroxisome proliferator-activated receptor gamma"/>
    <property type="match status" value="1"/>
</dbReference>
<dbReference type="FunFam" id="3.30.50.10:FF:000010">
    <property type="entry name" value="Peroxisome proliferator-activated receptor gamma"/>
    <property type="match status" value="1"/>
</dbReference>
<dbReference type="Gene3D" id="3.30.50.10">
    <property type="entry name" value="Erythroid Transcription Factor GATA-1, subunit A"/>
    <property type="match status" value="1"/>
</dbReference>
<dbReference type="Gene3D" id="1.10.565.10">
    <property type="entry name" value="Retinoid X Receptor"/>
    <property type="match status" value="1"/>
</dbReference>
<dbReference type="InterPro" id="IPR003074">
    <property type="entry name" value="1Cnucl_rcpt"/>
</dbReference>
<dbReference type="InterPro" id="IPR035500">
    <property type="entry name" value="NHR-like_dom_sf"/>
</dbReference>
<dbReference type="InterPro" id="IPR000536">
    <property type="entry name" value="Nucl_hrmn_rcpt_lig-bd"/>
</dbReference>
<dbReference type="InterPro" id="IPR050234">
    <property type="entry name" value="Nuclear_hormone_rcpt_NR1"/>
</dbReference>
<dbReference type="InterPro" id="IPR001723">
    <property type="entry name" value="Nuclear_hrmn_rcpt"/>
</dbReference>
<dbReference type="InterPro" id="IPR003077">
    <property type="entry name" value="PPAR-gamma"/>
</dbReference>
<dbReference type="InterPro" id="IPR022590">
    <property type="entry name" value="PPARgamma_N"/>
</dbReference>
<dbReference type="InterPro" id="IPR001628">
    <property type="entry name" value="Znf_hrmn_rcpt"/>
</dbReference>
<dbReference type="InterPro" id="IPR013088">
    <property type="entry name" value="Znf_NHR/GATA"/>
</dbReference>
<dbReference type="PANTHER" id="PTHR24082">
    <property type="entry name" value="NUCLEAR HORMONE RECEPTOR"/>
    <property type="match status" value="1"/>
</dbReference>
<dbReference type="PANTHER" id="PTHR24082:SF488">
    <property type="entry name" value="PEROXISOME PROLIFERATOR-ACTIVATED RECEPTOR GAMMA"/>
    <property type="match status" value="1"/>
</dbReference>
<dbReference type="Pfam" id="PF00104">
    <property type="entry name" value="Hormone_recep"/>
    <property type="match status" value="1"/>
</dbReference>
<dbReference type="Pfam" id="PF12577">
    <property type="entry name" value="PPARgamma_N"/>
    <property type="match status" value="1"/>
</dbReference>
<dbReference type="Pfam" id="PF00105">
    <property type="entry name" value="zf-C4"/>
    <property type="match status" value="1"/>
</dbReference>
<dbReference type="PRINTS" id="PR01288">
    <property type="entry name" value="PROXISOMEPAR"/>
</dbReference>
<dbReference type="PRINTS" id="PR01291">
    <property type="entry name" value="PROXISOMPAGR"/>
</dbReference>
<dbReference type="PRINTS" id="PR00398">
    <property type="entry name" value="STRDHORMONER"/>
</dbReference>
<dbReference type="PRINTS" id="PR00047">
    <property type="entry name" value="STROIDFINGER"/>
</dbReference>
<dbReference type="SMART" id="SM00430">
    <property type="entry name" value="HOLI"/>
    <property type="match status" value="1"/>
</dbReference>
<dbReference type="SMART" id="SM00399">
    <property type="entry name" value="ZnF_C4"/>
    <property type="match status" value="1"/>
</dbReference>
<dbReference type="SUPFAM" id="SSF57716">
    <property type="entry name" value="Glucocorticoid receptor-like (DNA-binding domain)"/>
    <property type="match status" value="1"/>
</dbReference>
<dbReference type="SUPFAM" id="SSF48508">
    <property type="entry name" value="Nuclear receptor ligand-binding domain"/>
    <property type="match status" value="1"/>
</dbReference>
<dbReference type="PROSITE" id="PS51843">
    <property type="entry name" value="NR_LBD"/>
    <property type="match status" value="1"/>
</dbReference>
<dbReference type="PROSITE" id="PS00031">
    <property type="entry name" value="NUCLEAR_REC_DBD_1"/>
    <property type="match status" value="1"/>
</dbReference>
<dbReference type="PROSITE" id="PS51030">
    <property type="entry name" value="NUCLEAR_REC_DBD_2"/>
    <property type="match status" value="1"/>
</dbReference>
<proteinExistence type="evidence at transcript level"/>
<comment type="function">
    <text evidence="2 3">Nuclear receptor that binds peroxisome proliferators such as hypolipidemic drugs and fatty acids. Once activated by a ligand, the nuclear receptor binds to DNA specific PPAR response elements (PPRE) and modulates the transcription of its target genes, such as acyl-CoA oxidase. It therefore controls the peroxisomal beta-oxidation pathway of fatty acids. Key regulator of adipocyte differentiation and glucose homeostasis. ARF6 acts as a key regulator of the tissue-specific adipocyte P2 (aP2) enhancer. Acts as a critical regulator of gut homeostasis by suppressing NF-kappa-B-mediated pro-inflammatory responses. Plays a role in the regulation of cardiovascular circadian rhythms by regulating the transcription of BMAL1 in the blood vessels.</text>
</comment>
<comment type="activity regulation">
    <text evidence="1">PDPK1 activates its transcriptional activity independently of its kinase activity.</text>
</comment>
<comment type="subunit">
    <text evidence="2 3">Interacts with FOXO1 (acetylated form) (By similarity). Heterodimer with other nuclear receptors, such as RXRA. The heterodimer with the retinoic acid receptor RXRA is called adipocyte-specific transcription factor ARF6. Interacts with NCOA6 coactivator, leading to a strong increase in transcription of target genes. Interacts with coactivator PPARBP, leading to a mild increase in transcription of target genes. Interacts with NOCA7 in a ligand-inducible manner. Interacts with NCOA1 and NCOA2 LXXLL motifs. Interacts with ASXL1, ASXL2, DNTTIP2, FAM120B, MAP2K1/MEK1, NR0B2, PDPK1, PRDM16, PRMT2 and TGFB1I1. Interacts (when activated by agonist) with PPP5C. Interacts with HELZ2 and THRAP3; the interaction stimulates the transcriptional activity of PPARG. Interacts with PER2, the interaction is ligand dependent and blocks PPARG recruitment to target promoters. Interacts with NOCT. Interacts with ACTN4. Interacts (when in the liganded conformation) with GPS2 (By similarity). Interacts with CRY1 and CRY2 in a ligand-dependent manner (By similarity). In the absence of hormonal ligand, interacts with TACC1 (By similarity). In macrophages, interacts with PAQR3 and STUB1; the interactions promote PPARG poylubiquitination and STUB1-mediated degradation (By similarity).</text>
</comment>
<comment type="subcellular location">
    <subcellularLocation>
        <location evidence="4">Nucleus</location>
    </subcellularLocation>
    <subcellularLocation>
        <location evidence="1">Cytoplasm</location>
    </subcellularLocation>
    <text evidence="1">Redistributed from the nucleus to the cytosol through a MAP2K1/MEK1-dependent manner. NOCT enhances its nuclear translocation (By similarity).</text>
</comment>
<comment type="alternative products">
    <event type="alternative splicing"/>
    <isoform>
        <id>O62807-1</id>
        <name>2</name>
        <sequence type="displayed"/>
    </isoform>
    <isoform>
        <id>O62807-2</id>
        <name>1</name>
        <sequence type="described" ref="VSP_003648"/>
    </isoform>
</comment>
<comment type="tissue specificity">
    <text>Highest expression in adipose tissue and lower in spleen. Very low levels in kidney, intestine, lung and muscle.</text>
</comment>
<comment type="domain">
    <text evidence="2">The 9aaTAD motif is a transactivation domain present in a large number of yeast and animal transcription factors.</text>
</comment>
<comment type="PTM">
    <text evidence="2">Phosphorylated at basal conditions and dephosphorylated when treated with the ligand. May be dephosphorylated by PPP5C. The phosphorylated form may be inactive and dephosphorylation induces adipogenic activity (By similarity).</text>
</comment>
<comment type="PTM">
    <text evidence="2 3">Ubiquitinated by E3 ubiquitin-protein ligase complex containing FBXO9; leading to proteasomal degradation (By similarity). Ubiquitinated at Lys-251 by TRIM55 leading to proteasomal degradation (By similarity). Ubiquitinated by E3 ubiquitin-protein ligase STUB1/CHIP; leading to proteasomal degradation (By similarity).</text>
</comment>
<comment type="similarity">
    <text evidence="8">Belongs to the nuclear hormone receptor family. NR1 subfamily.</text>
</comment>
<accession>O62807</accession>
<accession>O77815</accession>
<accession>Q6L9M2</accession>
<protein>
    <recommendedName>
        <fullName>Peroxisome proliferator-activated receptor gamma</fullName>
        <shortName>PPAR-gamma</shortName>
    </recommendedName>
    <alternativeName>
        <fullName>Nuclear receptor subfamily 1 group C member 3</fullName>
    </alternativeName>
</protein>
<organism>
    <name type="scientific">Sus scrofa</name>
    <name type="common">Pig</name>
    <dbReference type="NCBI Taxonomy" id="9823"/>
    <lineage>
        <taxon>Eukaryota</taxon>
        <taxon>Metazoa</taxon>
        <taxon>Chordata</taxon>
        <taxon>Craniata</taxon>
        <taxon>Vertebrata</taxon>
        <taxon>Euteleostomi</taxon>
        <taxon>Mammalia</taxon>
        <taxon>Eutheria</taxon>
        <taxon>Laurasiatheria</taxon>
        <taxon>Artiodactyla</taxon>
        <taxon>Suina</taxon>
        <taxon>Suidae</taxon>
        <taxon>Sus</taxon>
    </lineage>
</organism>
<gene>
    <name type="primary">PPARG</name>
    <name type="synonym">NR1C3</name>
</gene>
<sequence length="504" mass="57512">MGETLGDSLIDPESDAFDTLSANISQEVTMVDTEMPFWPTNFGISSVDLSVMDDHSHSFDIKPFTTVDFSSISTPHYEDIPFPRADPMVADYKYDLKLQDYQSAIKVEPVSPPYYSEKTQLYNKPHEEPSNSLMAIECRVCGDKASGFHYGVHACEGCKGFFRRTIRLKLIYDRCDLNCRIHKKSRNKCQYCRFQKCLAVGMSHNAIRFGRMPQAEKEKLLAEISSDIDQLNPESADLRALAKHLYDSYIKSFPLTKAKARAILTGKTTDKSPFVIYDMNSLMMGEDKIKFKHITPLQEQSKEVAIRIFQGCQFRSVEAVQEITEYAKNIPGFVNLDLNDQVTLLKYGVHEIIYTMLASLMNKDGVLISEGQGFMTREFLKSLRKPFGDFMEPKFEFAVKFNALELDDSDLAIFIAVIILSGDRPGLLNVKPIEDIQDNLLQALELQLKLNHPESSQLFAKLLQKMTDLRQIVTEHVQLLQVIKKTETDMSLHPLLQEIYKDLY</sequence>